<gene>
    <name evidence="1" type="primary">tdh</name>
    <name type="ordered locus">ECP_3717</name>
</gene>
<sequence>MKALSKLKAEEGIWMTDVPVPELGHNDLLIKIRKTAICGTDVHIYNWDEWSQKTIPVPMVVGHEYVGEVVGIGQEVKGFKIGDRVSGEGHITCGHCRNCRGGRTHLCRNTIGVGVNRPGCFAEYLVIPAFNAFKIPDNISDDLASIFDPFGNAVHTALSFDLVGEDVLVSGAGPIGIMAAAVAKHVGARNVVITDVNEYRLELARKMGITRAVNVAKENLNDVMAELGMTEGFDVGLEMSGAPPAFRTMLDTMNHGGRIAMLGIPPSDMSIDWTKVIFKGLFIKGIYGREMFETWYKMAALIQSGLDLSPIITHRFSIDDFQKGFDAMRSGQSGKVILSWD</sequence>
<keyword id="KW-0963">Cytoplasm</keyword>
<keyword id="KW-0479">Metal-binding</keyword>
<keyword id="KW-0520">NAD</keyword>
<keyword id="KW-0560">Oxidoreductase</keyword>
<keyword id="KW-0862">Zinc</keyword>
<organism>
    <name type="scientific">Escherichia coli O6:K15:H31 (strain 536 / UPEC)</name>
    <dbReference type="NCBI Taxonomy" id="362663"/>
    <lineage>
        <taxon>Bacteria</taxon>
        <taxon>Pseudomonadati</taxon>
        <taxon>Pseudomonadota</taxon>
        <taxon>Gammaproteobacteria</taxon>
        <taxon>Enterobacterales</taxon>
        <taxon>Enterobacteriaceae</taxon>
        <taxon>Escherichia</taxon>
    </lineage>
</organism>
<evidence type="ECO:0000255" key="1">
    <source>
        <dbReference type="HAMAP-Rule" id="MF_00627"/>
    </source>
</evidence>
<accession>Q0TBJ0</accession>
<protein>
    <recommendedName>
        <fullName evidence="1">L-threonine 3-dehydrogenase</fullName>
        <shortName evidence="1">TDH</shortName>
        <ecNumber evidence="1">1.1.1.103</ecNumber>
    </recommendedName>
</protein>
<dbReference type="EC" id="1.1.1.103" evidence="1"/>
<dbReference type="EMBL" id="CP000247">
    <property type="protein sequence ID" value="ABG71689.1"/>
    <property type="molecule type" value="Genomic_DNA"/>
</dbReference>
<dbReference type="RefSeq" id="WP_000646014.1">
    <property type="nucleotide sequence ID" value="NC_008253.1"/>
</dbReference>
<dbReference type="SMR" id="Q0TBJ0"/>
<dbReference type="GeneID" id="93778332"/>
<dbReference type="KEGG" id="ecp:ECP_3717"/>
<dbReference type="HOGENOM" id="CLU_026673_11_0_6"/>
<dbReference type="UniPathway" id="UPA00046">
    <property type="reaction ID" value="UER00505"/>
</dbReference>
<dbReference type="Proteomes" id="UP000009182">
    <property type="component" value="Chromosome"/>
</dbReference>
<dbReference type="GO" id="GO:0005737">
    <property type="term" value="C:cytoplasm"/>
    <property type="evidence" value="ECO:0007669"/>
    <property type="project" value="UniProtKB-SubCell"/>
</dbReference>
<dbReference type="GO" id="GO:0008743">
    <property type="term" value="F:L-threonine 3-dehydrogenase activity"/>
    <property type="evidence" value="ECO:0007669"/>
    <property type="project" value="UniProtKB-UniRule"/>
</dbReference>
<dbReference type="GO" id="GO:0008270">
    <property type="term" value="F:zinc ion binding"/>
    <property type="evidence" value="ECO:0007669"/>
    <property type="project" value="UniProtKB-UniRule"/>
</dbReference>
<dbReference type="GO" id="GO:0019518">
    <property type="term" value="P:L-threonine catabolic process to glycine"/>
    <property type="evidence" value="ECO:0007669"/>
    <property type="project" value="UniProtKB-UniPathway"/>
</dbReference>
<dbReference type="FunFam" id="3.40.50.720:FF:000059">
    <property type="entry name" value="L-threonine 3-dehydrogenase"/>
    <property type="match status" value="1"/>
</dbReference>
<dbReference type="Gene3D" id="3.90.180.10">
    <property type="entry name" value="Medium-chain alcohol dehydrogenases, catalytic domain"/>
    <property type="match status" value="1"/>
</dbReference>
<dbReference type="Gene3D" id="3.40.50.720">
    <property type="entry name" value="NAD(P)-binding Rossmann-like Domain"/>
    <property type="match status" value="1"/>
</dbReference>
<dbReference type="HAMAP" id="MF_00627">
    <property type="entry name" value="Thr_dehydrog"/>
    <property type="match status" value="1"/>
</dbReference>
<dbReference type="InterPro" id="IPR013149">
    <property type="entry name" value="ADH-like_C"/>
</dbReference>
<dbReference type="InterPro" id="IPR013154">
    <property type="entry name" value="ADH-like_N"/>
</dbReference>
<dbReference type="InterPro" id="IPR002328">
    <property type="entry name" value="ADH_Zn_CS"/>
</dbReference>
<dbReference type="InterPro" id="IPR011032">
    <property type="entry name" value="GroES-like_sf"/>
</dbReference>
<dbReference type="InterPro" id="IPR004627">
    <property type="entry name" value="L-Threonine_3-DHase"/>
</dbReference>
<dbReference type="InterPro" id="IPR036291">
    <property type="entry name" value="NAD(P)-bd_dom_sf"/>
</dbReference>
<dbReference type="InterPro" id="IPR020843">
    <property type="entry name" value="PKS_ER"/>
</dbReference>
<dbReference type="InterPro" id="IPR050129">
    <property type="entry name" value="Zn_alcohol_dh"/>
</dbReference>
<dbReference type="NCBIfam" id="NF003808">
    <property type="entry name" value="PRK05396.1"/>
    <property type="match status" value="1"/>
</dbReference>
<dbReference type="NCBIfam" id="TIGR00692">
    <property type="entry name" value="tdh"/>
    <property type="match status" value="1"/>
</dbReference>
<dbReference type="PANTHER" id="PTHR43401">
    <property type="entry name" value="L-THREONINE 3-DEHYDROGENASE"/>
    <property type="match status" value="1"/>
</dbReference>
<dbReference type="PANTHER" id="PTHR43401:SF2">
    <property type="entry name" value="L-THREONINE 3-DEHYDROGENASE"/>
    <property type="match status" value="1"/>
</dbReference>
<dbReference type="Pfam" id="PF08240">
    <property type="entry name" value="ADH_N"/>
    <property type="match status" value="1"/>
</dbReference>
<dbReference type="Pfam" id="PF00107">
    <property type="entry name" value="ADH_zinc_N"/>
    <property type="match status" value="1"/>
</dbReference>
<dbReference type="SMART" id="SM00829">
    <property type="entry name" value="PKS_ER"/>
    <property type="match status" value="1"/>
</dbReference>
<dbReference type="SUPFAM" id="SSF50129">
    <property type="entry name" value="GroES-like"/>
    <property type="match status" value="1"/>
</dbReference>
<dbReference type="SUPFAM" id="SSF51735">
    <property type="entry name" value="NAD(P)-binding Rossmann-fold domains"/>
    <property type="match status" value="1"/>
</dbReference>
<dbReference type="PROSITE" id="PS00059">
    <property type="entry name" value="ADH_ZINC"/>
    <property type="match status" value="1"/>
</dbReference>
<reference key="1">
    <citation type="journal article" date="2006" name="Mol. Microbiol.">
        <title>Role of pathogenicity island-associated integrases in the genome plasticity of uropathogenic Escherichia coli strain 536.</title>
        <authorList>
            <person name="Hochhut B."/>
            <person name="Wilde C."/>
            <person name="Balling G."/>
            <person name="Middendorf B."/>
            <person name="Dobrindt U."/>
            <person name="Brzuszkiewicz E."/>
            <person name="Gottschalk G."/>
            <person name="Carniel E."/>
            <person name="Hacker J."/>
        </authorList>
    </citation>
    <scope>NUCLEOTIDE SEQUENCE [LARGE SCALE GENOMIC DNA]</scope>
    <source>
        <strain>536 / UPEC</strain>
    </source>
</reference>
<feature type="chain" id="PRO_1000051633" description="L-threonine 3-dehydrogenase">
    <location>
        <begin position="1"/>
        <end position="341"/>
    </location>
</feature>
<feature type="active site" description="Charge relay system" evidence="1">
    <location>
        <position position="40"/>
    </location>
</feature>
<feature type="active site" description="Charge relay system" evidence="1">
    <location>
        <position position="43"/>
    </location>
</feature>
<feature type="binding site" evidence="1">
    <location>
        <position position="38"/>
    </location>
    <ligand>
        <name>Zn(2+)</name>
        <dbReference type="ChEBI" id="CHEBI:29105"/>
        <label>1</label>
        <note>catalytic</note>
    </ligand>
</feature>
<feature type="binding site" evidence="1">
    <location>
        <position position="63"/>
    </location>
    <ligand>
        <name>Zn(2+)</name>
        <dbReference type="ChEBI" id="CHEBI:29105"/>
        <label>1</label>
        <note>catalytic</note>
    </ligand>
</feature>
<feature type="binding site" evidence="1">
    <location>
        <position position="64"/>
    </location>
    <ligand>
        <name>Zn(2+)</name>
        <dbReference type="ChEBI" id="CHEBI:29105"/>
        <label>1</label>
        <note>catalytic</note>
    </ligand>
</feature>
<feature type="binding site" evidence="1">
    <location>
        <position position="93"/>
    </location>
    <ligand>
        <name>Zn(2+)</name>
        <dbReference type="ChEBI" id="CHEBI:29105"/>
        <label>2</label>
    </ligand>
</feature>
<feature type="binding site" evidence="1">
    <location>
        <position position="96"/>
    </location>
    <ligand>
        <name>Zn(2+)</name>
        <dbReference type="ChEBI" id="CHEBI:29105"/>
        <label>2</label>
    </ligand>
</feature>
<feature type="binding site" evidence="1">
    <location>
        <position position="99"/>
    </location>
    <ligand>
        <name>Zn(2+)</name>
        <dbReference type="ChEBI" id="CHEBI:29105"/>
        <label>2</label>
    </ligand>
</feature>
<feature type="binding site" evidence="1">
    <location>
        <position position="107"/>
    </location>
    <ligand>
        <name>Zn(2+)</name>
        <dbReference type="ChEBI" id="CHEBI:29105"/>
        <label>2</label>
    </ligand>
</feature>
<feature type="binding site" evidence="1">
    <location>
        <position position="175"/>
    </location>
    <ligand>
        <name>NAD(+)</name>
        <dbReference type="ChEBI" id="CHEBI:57540"/>
    </ligand>
</feature>
<feature type="binding site" evidence="1">
    <location>
        <position position="195"/>
    </location>
    <ligand>
        <name>NAD(+)</name>
        <dbReference type="ChEBI" id="CHEBI:57540"/>
    </ligand>
</feature>
<feature type="binding site" evidence="1">
    <location>
        <position position="200"/>
    </location>
    <ligand>
        <name>NAD(+)</name>
        <dbReference type="ChEBI" id="CHEBI:57540"/>
    </ligand>
</feature>
<feature type="binding site" evidence="1">
    <location>
        <begin position="262"/>
        <end position="264"/>
    </location>
    <ligand>
        <name>NAD(+)</name>
        <dbReference type="ChEBI" id="CHEBI:57540"/>
    </ligand>
</feature>
<feature type="binding site" evidence="1">
    <location>
        <begin position="286"/>
        <end position="287"/>
    </location>
    <ligand>
        <name>NAD(+)</name>
        <dbReference type="ChEBI" id="CHEBI:57540"/>
    </ligand>
</feature>
<feature type="site" description="Important for catalytic activity for the proton relay mechanism but does not participate directly in the coordination of zinc atom" evidence="1">
    <location>
        <position position="148"/>
    </location>
</feature>
<proteinExistence type="inferred from homology"/>
<comment type="function">
    <text evidence="1">Catalyzes the NAD(+)-dependent oxidation of L-threonine to 2-amino-3-ketobutyrate.</text>
</comment>
<comment type="catalytic activity">
    <reaction evidence="1">
        <text>L-threonine + NAD(+) = (2S)-2-amino-3-oxobutanoate + NADH + H(+)</text>
        <dbReference type="Rhea" id="RHEA:13161"/>
        <dbReference type="ChEBI" id="CHEBI:15378"/>
        <dbReference type="ChEBI" id="CHEBI:57540"/>
        <dbReference type="ChEBI" id="CHEBI:57926"/>
        <dbReference type="ChEBI" id="CHEBI:57945"/>
        <dbReference type="ChEBI" id="CHEBI:78948"/>
        <dbReference type="EC" id="1.1.1.103"/>
    </reaction>
</comment>
<comment type="cofactor">
    <cofactor evidence="1">
        <name>Zn(2+)</name>
        <dbReference type="ChEBI" id="CHEBI:29105"/>
    </cofactor>
    <text evidence="1">Binds 2 Zn(2+) ions per subunit.</text>
</comment>
<comment type="pathway">
    <text evidence="1">Amino-acid degradation; L-threonine degradation via oxydo-reductase pathway; glycine from L-threonine: step 1/2.</text>
</comment>
<comment type="subunit">
    <text evidence="1">Homotetramer.</text>
</comment>
<comment type="subcellular location">
    <subcellularLocation>
        <location evidence="1">Cytoplasm</location>
    </subcellularLocation>
</comment>
<comment type="similarity">
    <text evidence="1">Belongs to the zinc-containing alcohol dehydrogenase family.</text>
</comment>
<name>TDH_ECOL5</name>